<protein>
    <recommendedName>
        <fullName evidence="3">Conotoxin tx3d</fullName>
    </recommendedName>
    <alternativeName>
        <fullName evidence="4">Conotoxin 1</fullName>
    </alternativeName>
</protein>
<accession>P86260</accession>
<feature type="peptide" id="PRO_0000371272" description="Conotoxin tx3d" evidence="2">
    <location>
        <begin position="1"/>
        <end position="16"/>
    </location>
</feature>
<feature type="disulfide bond" evidence="1">
    <location>
        <begin position="2"/>
        <end position="16"/>
    </location>
</feature>
<feature type="disulfide bond" evidence="1">
    <location>
        <begin position="3"/>
        <end position="12"/>
    </location>
</feature>
<feature type="disulfide bond" evidence="1">
    <location>
        <begin position="8"/>
        <end position="15"/>
    </location>
</feature>
<keyword id="KW-0903">Direct protein sequencing</keyword>
<keyword id="KW-1015">Disulfide bond</keyword>
<keyword id="KW-0964">Secreted</keyword>
<keyword id="KW-0800">Toxin</keyword>
<evidence type="ECO:0000250" key="1">
    <source>
        <dbReference type="UniProtKB" id="P0CI24"/>
    </source>
</evidence>
<evidence type="ECO:0000269" key="2">
    <source>
    </source>
</evidence>
<evidence type="ECO:0000303" key="3">
    <source>
    </source>
</evidence>
<evidence type="ECO:0000305" key="4"/>
<evidence type="ECO:0000305" key="5">
    <source>
    </source>
</evidence>
<evidence type="ECO:0000305" key="6">
    <source>
    </source>
</evidence>
<dbReference type="ConoServer" id="3750">
    <property type="toxin name" value="Tx3d"/>
</dbReference>
<dbReference type="GO" id="GO:0005576">
    <property type="term" value="C:extracellular region"/>
    <property type="evidence" value="ECO:0007669"/>
    <property type="project" value="UniProtKB-SubCell"/>
</dbReference>
<dbReference type="GO" id="GO:0090729">
    <property type="term" value="F:toxin activity"/>
    <property type="evidence" value="ECO:0007669"/>
    <property type="project" value="UniProtKB-KW"/>
</dbReference>
<comment type="subcellular location">
    <subcellularLocation>
        <location evidence="2">Secreted</location>
    </subcellularLocation>
</comment>
<comment type="tissue specificity">
    <text evidence="5 6">Expressed by the venom duct. Is present in all duct parts with a highest content in part 2 (proximal of the venom bulb) and then decreases in concentration toward the end of the duct.</text>
</comment>
<comment type="domain">
    <text evidence="4">The cysteine framework is III (CC-C-C-CC). Classified in the M-2 branch, since 2 residues stand between the fourth and the fifth cysteine residues.</text>
</comment>
<comment type="PTM">
    <text evidence="2">Contains 3 disulfide bonds.</text>
</comment>
<comment type="mass spectrometry" mass="1591.497" error="0.02" method="Electrospray" evidence="2"/>
<comment type="similarity">
    <text evidence="4">Belongs to the conotoxin M superfamily.</text>
</comment>
<organism>
    <name type="scientific">Conus textile</name>
    <name type="common">Cloth-of-gold cone</name>
    <dbReference type="NCBI Taxonomy" id="6494"/>
    <lineage>
        <taxon>Eukaryota</taxon>
        <taxon>Metazoa</taxon>
        <taxon>Spiralia</taxon>
        <taxon>Lophotrochozoa</taxon>
        <taxon>Mollusca</taxon>
        <taxon>Gastropoda</taxon>
        <taxon>Caenogastropoda</taxon>
        <taxon>Neogastropoda</taxon>
        <taxon>Conoidea</taxon>
        <taxon>Conidae</taxon>
        <taxon>Conus</taxon>
        <taxon>Cylinder</taxon>
    </lineage>
</organism>
<name>M3D_CONTE</name>
<reference key="1">
    <citation type="journal article" date="2009" name="Proc. Natl. Acad. Sci. U.S.A.">
        <title>Rapid sensitive analysis of cysteine rich peptide venom components.</title>
        <authorList>
            <person name="Ueberheide B.M."/>
            <person name="Fenyo D."/>
            <person name="Alewood P.F."/>
            <person name="Chait B.T."/>
        </authorList>
    </citation>
    <scope>PROTEIN SEQUENCE</scope>
    <scope>SUBCELLULAR LOCATION</scope>
    <scope>MASS SPECTROMETRY</scope>
    <source>
        <tissue>Venom</tissue>
    </source>
</reference>
<reference key="2">
    <citation type="journal article" date="2012" name="J. Proteome Res.">
        <title>Constrained de novo sequencing of conotoxins.</title>
        <authorList>
            <person name="Bhatia S."/>
            <person name="Kil Y.J."/>
            <person name="Ueberheide B."/>
            <person name="Chait B.T."/>
            <person name="Tayo L."/>
            <person name="Cruz L."/>
            <person name="Lu B."/>
            <person name="Yates J.R. III"/>
            <person name="Bern M."/>
        </authorList>
    </citation>
    <scope>IDENTIFICATION BY MASS SPECTROMETRY</scope>
    <scope>SUBCELLULAR LOCATION</scope>
    <source>
        <tissue>Venom</tissue>
    </source>
</reference>
<reference key="3">
    <citation type="journal article" date="2012" name="Toxicon">
        <title>Secretion and maturation of conotoxins in the venom ducts of Conus textile.</title>
        <authorList>
            <person name="Dobson R."/>
            <person name="Collodoro M."/>
            <person name="Gilles N."/>
            <person name="Turtoi A."/>
            <person name="De Pauw E."/>
            <person name="Quinton L."/>
        </authorList>
    </citation>
    <scope>IDENTIFICATION BY MASS SPECTROMETRY</scope>
    <scope>TISSUE SPECIFICITY</scope>
    <scope>POSITION IN VENOM DUCT</scope>
    <source>
        <tissue>Venom</tissue>
    </source>
</reference>
<sequence length="16" mass="1599">GCCGAFACRFGCTPCC</sequence>
<proteinExistence type="evidence at protein level"/>